<sequence>MAIKKYKPTTNGCRNMSVSAFSEITTQTPEKRLLVSHKDQAGRNNQGKITVRHRGGGVKRKYRLIDFKRNKDNIVGKVATIEYDPNRSANIALIHYLDGEKRYILAPKGLTVGMQIVSGKEADIKVANCLSLMNIPVGTTVHNIELKPGKGGQIARSAGSFCQIISREDKYVLLRLQSGEVPKVLGTCRATIGEIGNESYKLINYGKAGKKRFLGIRPTVRGSAMNPNDHPHGGGEGRAPIGRKSPMTPWGKKARGVKTRDRKKASNALIIRRRTK</sequence>
<accession>Q50264</accession>
<reference key="1">
    <citation type="journal article" date="1991" name="FEMS Microbiol. Lett.">
        <title>DNA sequence of the ribosomal protein genes rpl2 and rps19 from a plant-pathogenic mycoplasma-like organism.</title>
        <authorList>
            <person name="Lim P.O."/>
            <person name="Sears B.B."/>
        </authorList>
    </citation>
    <scope>NUCLEOTIDE SEQUENCE [GENOMIC DNA]</scope>
</reference>
<keyword id="KW-0687">Ribonucleoprotein</keyword>
<keyword id="KW-0689">Ribosomal protein</keyword>
<keyword id="KW-0694">RNA-binding</keyword>
<keyword id="KW-0699">rRNA-binding</keyword>
<protein>
    <recommendedName>
        <fullName evidence="1">Large ribosomal subunit protein uL2</fullName>
    </recommendedName>
    <alternativeName>
        <fullName evidence="3">50S ribosomal protein L2</fullName>
    </alternativeName>
</protein>
<feature type="chain" id="PRO_0000129524" description="Large ribosomal subunit protein uL2">
    <location>
        <begin position="1"/>
        <end position="276"/>
    </location>
</feature>
<feature type="region of interest" description="Disordered" evidence="2">
    <location>
        <begin position="221"/>
        <end position="276"/>
    </location>
</feature>
<feature type="compositionally biased region" description="Basic residues" evidence="2">
    <location>
        <begin position="252"/>
        <end position="276"/>
    </location>
</feature>
<evidence type="ECO:0000255" key="1">
    <source>
        <dbReference type="HAMAP-Rule" id="MF_01320"/>
    </source>
</evidence>
<evidence type="ECO:0000256" key="2">
    <source>
        <dbReference type="SAM" id="MobiDB-lite"/>
    </source>
</evidence>
<evidence type="ECO:0000305" key="3"/>
<dbReference type="EMBL" id="M74770">
    <property type="protein sequence ID" value="AAA25327.1"/>
    <property type="molecule type" value="Genomic_DNA"/>
</dbReference>
<dbReference type="SMR" id="Q50264"/>
<dbReference type="GO" id="GO:0015934">
    <property type="term" value="C:large ribosomal subunit"/>
    <property type="evidence" value="ECO:0007669"/>
    <property type="project" value="InterPro"/>
</dbReference>
<dbReference type="GO" id="GO:0019843">
    <property type="term" value="F:rRNA binding"/>
    <property type="evidence" value="ECO:0007669"/>
    <property type="project" value="UniProtKB-UniRule"/>
</dbReference>
<dbReference type="GO" id="GO:0003735">
    <property type="term" value="F:structural constituent of ribosome"/>
    <property type="evidence" value="ECO:0007669"/>
    <property type="project" value="InterPro"/>
</dbReference>
<dbReference type="GO" id="GO:0016740">
    <property type="term" value="F:transferase activity"/>
    <property type="evidence" value="ECO:0007669"/>
    <property type="project" value="InterPro"/>
</dbReference>
<dbReference type="GO" id="GO:0002181">
    <property type="term" value="P:cytoplasmic translation"/>
    <property type="evidence" value="ECO:0007669"/>
    <property type="project" value="TreeGrafter"/>
</dbReference>
<dbReference type="FunFam" id="2.30.30.30:FF:000001">
    <property type="entry name" value="50S ribosomal protein L2"/>
    <property type="match status" value="1"/>
</dbReference>
<dbReference type="FunFam" id="2.40.50.140:FF:000003">
    <property type="entry name" value="50S ribosomal protein L2"/>
    <property type="match status" value="1"/>
</dbReference>
<dbReference type="FunFam" id="4.10.950.10:FF:000001">
    <property type="entry name" value="50S ribosomal protein L2"/>
    <property type="match status" value="1"/>
</dbReference>
<dbReference type="Gene3D" id="2.30.30.30">
    <property type="match status" value="1"/>
</dbReference>
<dbReference type="Gene3D" id="2.40.50.140">
    <property type="entry name" value="Nucleic acid-binding proteins"/>
    <property type="match status" value="1"/>
</dbReference>
<dbReference type="Gene3D" id="4.10.950.10">
    <property type="entry name" value="Ribosomal protein L2, domain 3"/>
    <property type="match status" value="1"/>
</dbReference>
<dbReference type="HAMAP" id="MF_01320_B">
    <property type="entry name" value="Ribosomal_uL2_B"/>
    <property type="match status" value="1"/>
</dbReference>
<dbReference type="InterPro" id="IPR012340">
    <property type="entry name" value="NA-bd_OB-fold"/>
</dbReference>
<dbReference type="InterPro" id="IPR014722">
    <property type="entry name" value="Rib_uL2_dom2"/>
</dbReference>
<dbReference type="InterPro" id="IPR002171">
    <property type="entry name" value="Ribosomal_uL2"/>
</dbReference>
<dbReference type="InterPro" id="IPR005880">
    <property type="entry name" value="Ribosomal_uL2_bac/org-type"/>
</dbReference>
<dbReference type="InterPro" id="IPR022669">
    <property type="entry name" value="Ribosomal_uL2_C"/>
</dbReference>
<dbReference type="InterPro" id="IPR022671">
    <property type="entry name" value="Ribosomal_uL2_CS"/>
</dbReference>
<dbReference type="InterPro" id="IPR014726">
    <property type="entry name" value="Ribosomal_uL2_dom3"/>
</dbReference>
<dbReference type="InterPro" id="IPR022666">
    <property type="entry name" value="Ribosomal_uL2_RNA-bd_dom"/>
</dbReference>
<dbReference type="InterPro" id="IPR008991">
    <property type="entry name" value="Translation_prot_SH3-like_sf"/>
</dbReference>
<dbReference type="NCBIfam" id="TIGR01171">
    <property type="entry name" value="rplB_bact"/>
    <property type="match status" value="1"/>
</dbReference>
<dbReference type="PANTHER" id="PTHR13691:SF5">
    <property type="entry name" value="LARGE RIBOSOMAL SUBUNIT PROTEIN UL2M"/>
    <property type="match status" value="1"/>
</dbReference>
<dbReference type="PANTHER" id="PTHR13691">
    <property type="entry name" value="RIBOSOMAL PROTEIN L2"/>
    <property type="match status" value="1"/>
</dbReference>
<dbReference type="Pfam" id="PF00181">
    <property type="entry name" value="Ribosomal_L2"/>
    <property type="match status" value="1"/>
</dbReference>
<dbReference type="Pfam" id="PF03947">
    <property type="entry name" value="Ribosomal_L2_C"/>
    <property type="match status" value="1"/>
</dbReference>
<dbReference type="PIRSF" id="PIRSF002158">
    <property type="entry name" value="Ribosomal_L2"/>
    <property type="match status" value="1"/>
</dbReference>
<dbReference type="SMART" id="SM01383">
    <property type="entry name" value="Ribosomal_L2"/>
    <property type="match status" value="1"/>
</dbReference>
<dbReference type="SMART" id="SM01382">
    <property type="entry name" value="Ribosomal_L2_C"/>
    <property type="match status" value="1"/>
</dbReference>
<dbReference type="SUPFAM" id="SSF50249">
    <property type="entry name" value="Nucleic acid-binding proteins"/>
    <property type="match status" value="1"/>
</dbReference>
<dbReference type="SUPFAM" id="SSF50104">
    <property type="entry name" value="Translation proteins SH3-like domain"/>
    <property type="match status" value="1"/>
</dbReference>
<dbReference type="PROSITE" id="PS00467">
    <property type="entry name" value="RIBOSOMAL_L2"/>
    <property type="match status" value="1"/>
</dbReference>
<organism>
    <name type="scientific">Aster yellows phytoplasma</name>
    <dbReference type="NCBI Taxonomy" id="35779"/>
    <lineage>
        <taxon>Bacteria</taxon>
        <taxon>Bacillati</taxon>
        <taxon>Mycoplasmatota</taxon>
        <taxon>Mollicutes</taxon>
        <taxon>Acholeplasmatales</taxon>
        <taxon>Acholeplasmataceae</taxon>
        <taxon>Candidatus Phytoplasma</taxon>
        <taxon>16SrI (Aster yellows group)</taxon>
    </lineage>
</organism>
<proteinExistence type="inferred from homology"/>
<comment type="function">
    <text evidence="1">One of the primary rRNA binding proteins. Required for association of the 30S and 50S subunits to form the 70S ribosome, for tRNA binding and peptide bond formation. It has been suggested to have peptidyltransferase activity; this is somewhat controversial. Makes several contacts with the 16S rRNA in the 70S ribosome.</text>
</comment>
<comment type="subunit">
    <text evidence="1">Part of the 50S ribosomal subunit. Forms a bridge to the 30S subunit in the 70S ribosome.</text>
</comment>
<comment type="similarity">
    <text evidence="1">Belongs to the universal ribosomal protein uL2 family.</text>
</comment>
<name>RL2_ASTYP</name>
<gene>
    <name evidence="1" type="primary">rplB</name>
    <name evidence="1" type="synonym">rpl2</name>
</gene>